<feature type="chain" id="PRO_0000141329" description="Cobyric acid synthase">
    <location>
        <begin position="1"/>
        <end position="506"/>
    </location>
</feature>
<feature type="domain" description="GATase cobBQ-type">
    <location>
        <begin position="251"/>
        <end position="448"/>
    </location>
</feature>
<feature type="active site" description="Nucleophile" evidence="1">
    <location>
        <position position="332"/>
    </location>
</feature>
<feature type="active site" evidence="1">
    <location>
        <position position="440"/>
    </location>
</feature>
<accession>Q05597</accession>
<reference key="1">
    <citation type="journal article" date="1993" name="J. Bacteriol.">
        <title>Characterization of the cobalamin (vitamin B12) biosynthetic genes of Salmonella typhimurium.</title>
        <authorList>
            <person name="Roth J.R."/>
            <person name="Lawrence J.G."/>
            <person name="Rubenfield M."/>
            <person name="Kieffer-Higgins S."/>
            <person name="Church G.M."/>
        </authorList>
    </citation>
    <scope>NUCLEOTIDE SEQUENCE [GENOMIC DNA]</scope>
    <source>
        <strain>LT2</strain>
    </source>
</reference>
<reference key="2">
    <citation type="journal article" date="2001" name="Nature">
        <title>Complete genome sequence of Salmonella enterica serovar Typhimurium LT2.</title>
        <authorList>
            <person name="McClelland M."/>
            <person name="Sanderson K.E."/>
            <person name="Spieth J."/>
            <person name="Clifton S.W."/>
            <person name="Latreille P."/>
            <person name="Courtney L."/>
            <person name="Porwollik S."/>
            <person name="Ali J."/>
            <person name="Dante M."/>
            <person name="Du F."/>
            <person name="Hou S."/>
            <person name="Layman D."/>
            <person name="Leonard S."/>
            <person name="Nguyen C."/>
            <person name="Scott K."/>
            <person name="Holmes A."/>
            <person name="Grewal N."/>
            <person name="Mulvaney E."/>
            <person name="Ryan E."/>
            <person name="Sun H."/>
            <person name="Florea L."/>
            <person name="Miller W."/>
            <person name="Stoneking T."/>
            <person name="Nhan M."/>
            <person name="Waterston R."/>
            <person name="Wilson R.K."/>
        </authorList>
    </citation>
    <scope>NUCLEOTIDE SEQUENCE [LARGE SCALE GENOMIC DNA]</scope>
    <source>
        <strain>LT2 / SGSC1412 / ATCC 700720</strain>
    </source>
</reference>
<name>CBIP_SALTY</name>
<keyword id="KW-0169">Cobalamin biosynthesis</keyword>
<keyword id="KW-0315">Glutamine amidotransferase</keyword>
<keyword id="KW-1185">Reference proteome</keyword>
<evidence type="ECO:0000250" key="1"/>
<evidence type="ECO:0000305" key="2"/>
<dbReference type="EMBL" id="L12006">
    <property type="protein sequence ID" value="AAA27268.1"/>
    <property type="molecule type" value="Genomic_DNA"/>
</dbReference>
<dbReference type="EMBL" id="AE006468">
    <property type="protein sequence ID" value="AAL20923.1"/>
    <property type="molecule type" value="Genomic_DNA"/>
</dbReference>
<dbReference type="RefSeq" id="NP_460964.1">
    <property type="nucleotide sequence ID" value="NC_003197.2"/>
</dbReference>
<dbReference type="RefSeq" id="WP_000189662.1">
    <property type="nucleotide sequence ID" value="NC_003197.2"/>
</dbReference>
<dbReference type="SMR" id="Q05597"/>
<dbReference type="STRING" id="99287.STM2019"/>
<dbReference type="PaxDb" id="99287-STM2019"/>
<dbReference type="GeneID" id="1253540"/>
<dbReference type="KEGG" id="stm:STM2019"/>
<dbReference type="PATRIC" id="fig|99287.12.peg.2141"/>
<dbReference type="HOGENOM" id="CLU_019250_2_2_6"/>
<dbReference type="OMA" id="DVRMNPL"/>
<dbReference type="PhylomeDB" id="Q05597"/>
<dbReference type="BioCyc" id="MetaCyc:MONOMER-13223"/>
<dbReference type="BioCyc" id="SENT99287:STM2019-MONOMER"/>
<dbReference type="UniPathway" id="UPA00148"/>
<dbReference type="Proteomes" id="UP000001014">
    <property type="component" value="Chromosome"/>
</dbReference>
<dbReference type="GO" id="GO:0015420">
    <property type="term" value="F:ABC-type vitamin B12 transporter activity"/>
    <property type="evidence" value="ECO:0007669"/>
    <property type="project" value="UniProtKB-UniRule"/>
</dbReference>
<dbReference type="GO" id="GO:0003824">
    <property type="term" value="F:catalytic activity"/>
    <property type="evidence" value="ECO:0007669"/>
    <property type="project" value="InterPro"/>
</dbReference>
<dbReference type="GO" id="GO:0009236">
    <property type="term" value="P:cobalamin biosynthetic process"/>
    <property type="evidence" value="ECO:0007669"/>
    <property type="project" value="UniProtKB-UniRule"/>
</dbReference>
<dbReference type="CDD" id="cd05389">
    <property type="entry name" value="CobQ_N"/>
    <property type="match status" value="1"/>
</dbReference>
<dbReference type="CDD" id="cd01750">
    <property type="entry name" value="GATase1_CobQ"/>
    <property type="match status" value="1"/>
</dbReference>
<dbReference type="Gene3D" id="3.40.50.880">
    <property type="match status" value="1"/>
</dbReference>
<dbReference type="Gene3D" id="3.40.50.300">
    <property type="entry name" value="P-loop containing nucleotide triphosphate hydrolases"/>
    <property type="match status" value="1"/>
</dbReference>
<dbReference type="HAMAP" id="MF_00028">
    <property type="entry name" value="CobQ"/>
    <property type="match status" value="1"/>
</dbReference>
<dbReference type="InterPro" id="IPR029062">
    <property type="entry name" value="Class_I_gatase-like"/>
</dbReference>
<dbReference type="InterPro" id="IPR002586">
    <property type="entry name" value="CobQ/CobB/MinD/ParA_Nub-bd_dom"/>
</dbReference>
<dbReference type="InterPro" id="IPR033949">
    <property type="entry name" value="CobQ_GATase1"/>
</dbReference>
<dbReference type="InterPro" id="IPR047045">
    <property type="entry name" value="CobQ_N"/>
</dbReference>
<dbReference type="InterPro" id="IPR004459">
    <property type="entry name" value="CobQ_synth"/>
</dbReference>
<dbReference type="InterPro" id="IPR011698">
    <property type="entry name" value="GATase_3"/>
</dbReference>
<dbReference type="InterPro" id="IPR027417">
    <property type="entry name" value="P-loop_NTPase"/>
</dbReference>
<dbReference type="NCBIfam" id="TIGR00313">
    <property type="entry name" value="cobQ"/>
    <property type="match status" value="1"/>
</dbReference>
<dbReference type="NCBIfam" id="NF001989">
    <property type="entry name" value="PRK00784.1"/>
    <property type="match status" value="1"/>
</dbReference>
<dbReference type="PANTHER" id="PTHR21343:SF1">
    <property type="entry name" value="COBYRIC ACID SYNTHASE"/>
    <property type="match status" value="1"/>
</dbReference>
<dbReference type="PANTHER" id="PTHR21343">
    <property type="entry name" value="DETHIOBIOTIN SYNTHETASE"/>
    <property type="match status" value="1"/>
</dbReference>
<dbReference type="Pfam" id="PF01656">
    <property type="entry name" value="CbiA"/>
    <property type="match status" value="1"/>
</dbReference>
<dbReference type="Pfam" id="PF07685">
    <property type="entry name" value="GATase_3"/>
    <property type="match status" value="1"/>
</dbReference>
<dbReference type="SUPFAM" id="SSF52317">
    <property type="entry name" value="Class I glutamine amidotransferase-like"/>
    <property type="match status" value="1"/>
</dbReference>
<dbReference type="SUPFAM" id="SSF52540">
    <property type="entry name" value="P-loop containing nucleoside triphosphate hydrolases"/>
    <property type="match status" value="1"/>
</dbReference>
<dbReference type="PROSITE" id="PS51274">
    <property type="entry name" value="GATASE_COBBQ"/>
    <property type="match status" value="1"/>
</dbReference>
<comment type="function">
    <text>Catalyzes amidations at positions B, D, E, and G on adenosylcobyrinic A,C-diamide. NH(2) groups are provided by glutamine, and one molecule of ATP is hydrogenolyzed for each amidation.</text>
</comment>
<comment type="pathway">
    <text>Cofactor biosynthesis; adenosylcobalamin biosynthesis.</text>
</comment>
<comment type="subunit">
    <text evidence="1">Homodimer.</text>
</comment>
<comment type="similarity">
    <text evidence="2">Belongs to the CobB/CobQ family. CobQ subfamily.</text>
</comment>
<protein>
    <recommendedName>
        <fullName>Cobyric acid synthase</fullName>
    </recommendedName>
</protein>
<proteinExistence type="inferred from homology"/>
<organism>
    <name type="scientific">Salmonella typhimurium (strain LT2 / SGSC1412 / ATCC 700720)</name>
    <dbReference type="NCBI Taxonomy" id="99287"/>
    <lineage>
        <taxon>Bacteria</taxon>
        <taxon>Pseudomonadati</taxon>
        <taxon>Pseudomonadota</taxon>
        <taxon>Gammaproteobacteria</taxon>
        <taxon>Enterobacterales</taxon>
        <taxon>Enterobacteriaceae</taxon>
        <taxon>Salmonella</taxon>
    </lineage>
</organism>
<sequence length="506" mass="54967">MTQAVMLQGTASDVGKSVLAAGLCRIFYQDGLRTAPFKSQNMALNSGITPDGKEMGRAQIFQAEAAGITPDVRMNPVLLKPTSDRQAQVVLMGKVATNMDAVSYHDYKPRLREQILAVYNSLAQEYDVIVLEGAGSPAEINLRDRDIVNMGMAEMAQCPVILVADIDRGGVFAAIYGTLALLHKQERDRVKGVIINKFRGDVALLYSGIEQIESLTGVPVLGVMPWLDVDLEDEDGVALQNDKYRGNAPRDITIAIVQLPHISNFTDFNALAAQPDVRIRYIRRPEALTDVDLVILPGSKNTLSDLAWLRESGMADAVLQTHRQGVPVMGICGGYQMLGDTIVDEVESGLGTQPGLGLLNTITRFAQDKTTTQVNATMSGELPGWLAAAAGLPVRGYEIHMGETVLQEGCCTAMTLQKNGCSVADGAVTADGLAFGTYLHGLFDSDAFTRAVVNGLRARKGLAPWETTFCYADHKARQFDLLAEAMRQHIDIDKIYTIMQQHQEPV</sequence>
<gene>
    <name type="primary">cbiP</name>
    <name type="ordered locus">STM2019</name>
</gene>